<reference key="1">
    <citation type="journal article" date="2000" name="Nature">
        <title>Complete genome sequence of Pseudomonas aeruginosa PAO1, an opportunistic pathogen.</title>
        <authorList>
            <person name="Stover C.K."/>
            <person name="Pham X.-Q.T."/>
            <person name="Erwin A.L."/>
            <person name="Mizoguchi S.D."/>
            <person name="Warrener P."/>
            <person name="Hickey M.J."/>
            <person name="Brinkman F.S.L."/>
            <person name="Hufnagle W.O."/>
            <person name="Kowalik D.J."/>
            <person name="Lagrou M."/>
            <person name="Garber R.L."/>
            <person name="Goltry L."/>
            <person name="Tolentino E."/>
            <person name="Westbrock-Wadman S."/>
            <person name="Yuan Y."/>
            <person name="Brody L.L."/>
            <person name="Coulter S.N."/>
            <person name="Folger K.R."/>
            <person name="Kas A."/>
            <person name="Larbig K."/>
            <person name="Lim R.M."/>
            <person name="Smith K.A."/>
            <person name="Spencer D.H."/>
            <person name="Wong G.K.-S."/>
            <person name="Wu Z."/>
            <person name="Paulsen I.T."/>
            <person name="Reizer J."/>
            <person name="Saier M.H. Jr."/>
            <person name="Hancock R.E.W."/>
            <person name="Lory S."/>
            <person name="Olson M.V."/>
        </authorList>
    </citation>
    <scope>NUCLEOTIDE SEQUENCE [LARGE SCALE GENOMIC DNA]</scope>
    <source>
        <strain>ATCC 15692 / DSM 22644 / CIP 104116 / JCM 14847 / LMG 12228 / 1C / PRS 101 / PAO1</strain>
    </source>
</reference>
<reference key="2">
    <citation type="submission" date="2005-04" db="PDB data bank">
        <title>Crystal structure of the conserved hypothetical protein PA3332 from Pseudomonas aeruginosa.</title>
        <authorList>
            <consortium name="Midwest center for structural genomics (MCSG)"/>
        </authorList>
    </citation>
    <scope>X-RAY CRYSTALLOGRAPHY (1.49 ANGSTROMS)</scope>
</reference>
<protein>
    <recommendedName>
        <fullName>Uncharacterized PhzA/B-like protein PA3332</fullName>
    </recommendedName>
</protein>
<proteinExistence type="evidence at protein level"/>
<keyword id="KW-0002">3D-structure</keyword>
<keyword id="KW-1185">Reference proteome</keyword>
<gene>
    <name type="ordered locus">PA3332</name>
</gene>
<sequence>MNAKEILVHSLRLLENGDARGWCDLFHPEGVLEFPYAPPGWKTRFEGRETIWAHMRLFPEHLTVRFTDVQFYETADPDLAIGEFHGDGVATVSGGKLAQDYISVLRTRDGQILLYRDFWNPLRHLEALGGVEAAAKIVQGA</sequence>
<comment type="similarity">
    <text evidence="1">Belongs to the PhzA/PhzB family.</text>
</comment>
<feature type="chain" id="PRO_0000287802" description="Uncharacterized PhzA/B-like protein PA3332">
    <location>
        <begin position="1"/>
        <end position="141"/>
    </location>
</feature>
<feature type="helix" evidence="2">
    <location>
        <begin position="3"/>
        <end position="15"/>
    </location>
</feature>
<feature type="helix" evidence="2">
    <location>
        <begin position="19"/>
        <end position="24"/>
    </location>
</feature>
<feature type="strand" evidence="2">
    <location>
        <begin position="26"/>
        <end position="33"/>
    </location>
</feature>
<feature type="strand" evidence="2">
    <location>
        <begin position="44"/>
        <end position="47"/>
    </location>
</feature>
<feature type="helix" evidence="2">
    <location>
        <begin position="48"/>
        <end position="53"/>
    </location>
</feature>
<feature type="turn" evidence="2">
    <location>
        <begin position="54"/>
        <end position="57"/>
    </location>
</feature>
<feature type="helix" evidence="2">
    <location>
        <begin position="58"/>
        <end position="60"/>
    </location>
</feature>
<feature type="strand" evidence="2">
    <location>
        <begin position="62"/>
        <end position="66"/>
    </location>
</feature>
<feature type="strand" evidence="2">
    <location>
        <begin position="70"/>
        <end position="72"/>
    </location>
</feature>
<feature type="strand" evidence="3">
    <location>
        <begin position="74"/>
        <end position="76"/>
    </location>
</feature>
<feature type="strand" evidence="2">
    <location>
        <begin position="79"/>
        <end position="90"/>
    </location>
</feature>
<feature type="turn" evidence="2">
    <location>
        <begin position="91"/>
        <end position="93"/>
    </location>
</feature>
<feature type="strand" evidence="2">
    <location>
        <begin position="96"/>
        <end position="108"/>
    </location>
</feature>
<feature type="strand" evidence="2">
    <location>
        <begin position="111"/>
        <end position="119"/>
    </location>
</feature>
<feature type="helix" evidence="2">
    <location>
        <begin position="121"/>
        <end position="128"/>
    </location>
</feature>
<organism>
    <name type="scientific">Pseudomonas aeruginosa (strain ATCC 15692 / DSM 22644 / CIP 104116 / JCM 14847 / LMG 12228 / 1C / PRS 101 / PAO1)</name>
    <dbReference type="NCBI Taxonomy" id="208964"/>
    <lineage>
        <taxon>Bacteria</taxon>
        <taxon>Pseudomonadati</taxon>
        <taxon>Pseudomonadota</taxon>
        <taxon>Gammaproteobacteria</taxon>
        <taxon>Pseudomonadales</taxon>
        <taxon>Pseudomonadaceae</taxon>
        <taxon>Pseudomonas</taxon>
    </lineage>
</organism>
<accession>Q9HYR3</accession>
<evidence type="ECO:0000305" key="1"/>
<evidence type="ECO:0007829" key="2">
    <source>
        <dbReference type="PDB" id="1Z1S"/>
    </source>
</evidence>
<evidence type="ECO:0007829" key="3">
    <source>
        <dbReference type="PDB" id="4J8T"/>
    </source>
</evidence>
<dbReference type="EMBL" id="AE004091">
    <property type="protein sequence ID" value="AAG06720.1"/>
    <property type="molecule type" value="Genomic_DNA"/>
</dbReference>
<dbReference type="PIR" id="H83229">
    <property type="entry name" value="H83229"/>
</dbReference>
<dbReference type="RefSeq" id="NP_252022.1">
    <property type="nucleotide sequence ID" value="NC_002516.2"/>
</dbReference>
<dbReference type="RefSeq" id="WP_003091711.1">
    <property type="nucleotide sequence ID" value="NZ_QZGE01000017.1"/>
</dbReference>
<dbReference type="PDB" id="1Z1S">
    <property type="method" value="X-ray"/>
    <property type="resolution" value="1.49 A"/>
    <property type="chains" value="A=1-141"/>
</dbReference>
<dbReference type="PDB" id="4J8T">
    <property type="method" value="X-ray"/>
    <property type="resolution" value="2.05 A"/>
    <property type="chains" value="A/B/C/D=1-132"/>
</dbReference>
<dbReference type="PDB" id="4J9A">
    <property type="method" value="X-ray"/>
    <property type="resolution" value="3.20 A"/>
    <property type="chains" value="A/B/C/D/E/F/G/H/I=1-132"/>
</dbReference>
<dbReference type="PDBsum" id="1Z1S"/>
<dbReference type="PDBsum" id="4J8T"/>
<dbReference type="PDBsum" id="4J9A"/>
<dbReference type="SMR" id="Q9HYR3"/>
<dbReference type="STRING" id="208964.PA3332"/>
<dbReference type="BindingDB" id="Q9HYR3"/>
<dbReference type="PaxDb" id="208964-PA3332"/>
<dbReference type="GeneID" id="882497"/>
<dbReference type="KEGG" id="pae:PA3332"/>
<dbReference type="PATRIC" id="fig|208964.12.peg.3490"/>
<dbReference type="PseudoCAP" id="PA3332"/>
<dbReference type="HOGENOM" id="CLU_124277_1_2_6"/>
<dbReference type="InParanoid" id="Q9HYR3"/>
<dbReference type="OrthoDB" id="117900at2"/>
<dbReference type="PhylomeDB" id="Q9HYR3"/>
<dbReference type="BioCyc" id="PAER208964:G1FZ6-3396-MONOMER"/>
<dbReference type="EvolutionaryTrace" id="Q9HYR3"/>
<dbReference type="Proteomes" id="UP000002438">
    <property type="component" value="Chromosome"/>
</dbReference>
<dbReference type="Gene3D" id="3.10.450.50">
    <property type="match status" value="1"/>
</dbReference>
<dbReference type="InterPro" id="IPR032710">
    <property type="entry name" value="NTF2-like_dom_sf"/>
</dbReference>
<dbReference type="InterPro" id="IPR037401">
    <property type="entry name" value="SnoaL-like"/>
</dbReference>
<dbReference type="Pfam" id="PF12680">
    <property type="entry name" value="SnoaL_2"/>
    <property type="match status" value="1"/>
</dbReference>
<dbReference type="SUPFAM" id="SSF54427">
    <property type="entry name" value="NTF2-like"/>
    <property type="match status" value="1"/>
</dbReference>
<name>Y3332_PSEAE</name>